<proteinExistence type="inferred from homology"/>
<evidence type="ECO:0000255" key="1">
    <source>
        <dbReference type="HAMAP-Rule" id="MF_01307"/>
    </source>
</evidence>
<evidence type="ECO:0000305" key="2"/>
<sequence>MPEQIDGNKLDLEERVVTINRVAKVVKGGRRFRFTALVVVGDKNGHVGFGTGKAQEVPDAIRKAVEDAKKNMVLVPTVDTTIPHTVVGHFGGGEILLKPASAGSGVTAGGPVRAVLELAGVADVSSKSLGSNTPINMVRATIDGIKQLKNAEDVAKLRGKTVEELLG</sequence>
<keyword id="KW-0687">Ribonucleoprotein</keyword>
<keyword id="KW-0689">Ribosomal protein</keyword>
<keyword id="KW-0694">RNA-binding</keyword>
<keyword id="KW-0699">rRNA-binding</keyword>
<protein>
    <recommendedName>
        <fullName evidence="1">Small ribosomal subunit protein uS5</fullName>
    </recommendedName>
    <alternativeName>
        <fullName evidence="2">30S ribosomal protein S5</fullName>
    </alternativeName>
</protein>
<feature type="chain" id="PRO_0000323152" description="Small ribosomal subunit protein uS5">
    <location>
        <begin position="1"/>
        <end position="167"/>
    </location>
</feature>
<feature type="domain" description="S5 DRBM" evidence="1">
    <location>
        <begin position="12"/>
        <end position="75"/>
    </location>
</feature>
<comment type="function">
    <text evidence="1">With S4 and S12 plays an important role in translational accuracy.</text>
</comment>
<comment type="function">
    <text evidence="1">Located at the back of the 30S subunit body where it stabilizes the conformation of the head with respect to the body.</text>
</comment>
<comment type="subunit">
    <text evidence="1">Part of the 30S ribosomal subunit. Contacts proteins S4 and S8.</text>
</comment>
<comment type="domain">
    <text>The N-terminal domain interacts with the head of the 30S subunit; the C-terminal domain interacts with the body and contacts protein S4. The interaction surface between S4 and S5 is involved in control of translational fidelity.</text>
</comment>
<comment type="similarity">
    <text evidence="1">Belongs to the universal ribosomal protein uS5 family.</text>
</comment>
<reference key="1">
    <citation type="journal article" date="2006" name="J. Bacteriol.">
        <title>Whole-genome sequence of Listeria welshimeri reveals common steps in genome reduction with Listeria innocua as compared to Listeria monocytogenes.</title>
        <authorList>
            <person name="Hain T."/>
            <person name="Steinweg C."/>
            <person name="Kuenne C.T."/>
            <person name="Billion A."/>
            <person name="Ghai R."/>
            <person name="Chatterjee S.S."/>
            <person name="Domann E."/>
            <person name="Kaerst U."/>
            <person name="Goesmann A."/>
            <person name="Bekel T."/>
            <person name="Bartels D."/>
            <person name="Kaiser O."/>
            <person name="Meyer F."/>
            <person name="Puehler A."/>
            <person name="Weisshaar B."/>
            <person name="Wehland J."/>
            <person name="Liang C."/>
            <person name="Dandekar T."/>
            <person name="Lampidis R."/>
            <person name="Kreft J."/>
            <person name="Goebel W."/>
            <person name="Chakraborty T."/>
        </authorList>
    </citation>
    <scope>NUCLEOTIDE SEQUENCE [LARGE SCALE GENOMIC DNA]</scope>
    <source>
        <strain>ATCC 35897 / DSM 20650 / CCUG 15529 / CIP 8149 / NCTC 11857 / SLCC 5334 / V8</strain>
    </source>
</reference>
<name>RS5_LISW6</name>
<organism>
    <name type="scientific">Listeria welshimeri serovar 6b (strain ATCC 35897 / DSM 20650 / CCUG 15529 / CIP 8149 / NCTC 11857 / SLCC 5334 / V8)</name>
    <dbReference type="NCBI Taxonomy" id="386043"/>
    <lineage>
        <taxon>Bacteria</taxon>
        <taxon>Bacillati</taxon>
        <taxon>Bacillota</taxon>
        <taxon>Bacilli</taxon>
        <taxon>Bacillales</taxon>
        <taxon>Listeriaceae</taxon>
        <taxon>Listeria</taxon>
    </lineage>
</organism>
<gene>
    <name evidence="1" type="primary">rpsE</name>
    <name type="ordered locus">lwe2565</name>
</gene>
<dbReference type="EMBL" id="AM263198">
    <property type="protein sequence ID" value="CAK21983.1"/>
    <property type="molecule type" value="Genomic_DNA"/>
</dbReference>
<dbReference type="RefSeq" id="WP_003723681.1">
    <property type="nucleotide sequence ID" value="NC_008555.1"/>
</dbReference>
<dbReference type="SMR" id="A0ALV1"/>
<dbReference type="STRING" id="386043.lwe2565"/>
<dbReference type="GeneID" id="93240496"/>
<dbReference type="KEGG" id="lwe:lwe2565"/>
<dbReference type="eggNOG" id="COG0098">
    <property type="taxonomic scope" value="Bacteria"/>
</dbReference>
<dbReference type="HOGENOM" id="CLU_065898_2_2_9"/>
<dbReference type="OrthoDB" id="9809045at2"/>
<dbReference type="Proteomes" id="UP000000779">
    <property type="component" value="Chromosome"/>
</dbReference>
<dbReference type="GO" id="GO:0015935">
    <property type="term" value="C:small ribosomal subunit"/>
    <property type="evidence" value="ECO:0007669"/>
    <property type="project" value="InterPro"/>
</dbReference>
<dbReference type="GO" id="GO:0019843">
    <property type="term" value="F:rRNA binding"/>
    <property type="evidence" value="ECO:0007669"/>
    <property type="project" value="UniProtKB-UniRule"/>
</dbReference>
<dbReference type="GO" id="GO:0003735">
    <property type="term" value="F:structural constituent of ribosome"/>
    <property type="evidence" value="ECO:0007669"/>
    <property type="project" value="InterPro"/>
</dbReference>
<dbReference type="GO" id="GO:0006412">
    <property type="term" value="P:translation"/>
    <property type="evidence" value="ECO:0007669"/>
    <property type="project" value="UniProtKB-UniRule"/>
</dbReference>
<dbReference type="FunFam" id="3.30.160.20:FF:000001">
    <property type="entry name" value="30S ribosomal protein S5"/>
    <property type="match status" value="1"/>
</dbReference>
<dbReference type="FunFam" id="3.30.230.10:FF:000002">
    <property type="entry name" value="30S ribosomal protein S5"/>
    <property type="match status" value="1"/>
</dbReference>
<dbReference type="Gene3D" id="3.30.160.20">
    <property type="match status" value="1"/>
</dbReference>
<dbReference type="Gene3D" id="3.30.230.10">
    <property type="match status" value="1"/>
</dbReference>
<dbReference type="HAMAP" id="MF_01307_B">
    <property type="entry name" value="Ribosomal_uS5_B"/>
    <property type="match status" value="1"/>
</dbReference>
<dbReference type="InterPro" id="IPR020568">
    <property type="entry name" value="Ribosomal_Su5_D2-typ_SF"/>
</dbReference>
<dbReference type="InterPro" id="IPR000851">
    <property type="entry name" value="Ribosomal_uS5"/>
</dbReference>
<dbReference type="InterPro" id="IPR005712">
    <property type="entry name" value="Ribosomal_uS5_bac-type"/>
</dbReference>
<dbReference type="InterPro" id="IPR005324">
    <property type="entry name" value="Ribosomal_uS5_C"/>
</dbReference>
<dbReference type="InterPro" id="IPR013810">
    <property type="entry name" value="Ribosomal_uS5_N"/>
</dbReference>
<dbReference type="InterPro" id="IPR018192">
    <property type="entry name" value="Ribosomal_uS5_N_CS"/>
</dbReference>
<dbReference type="InterPro" id="IPR014721">
    <property type="entry name" value="Ribsml_uS5_D2-typ_fold_subgr"/>
</dbReference>
<dbReference type="NCBIfam" id="TIGR01021">
    <property type="entry name" value="rpsE_bact"/>
    <property type="match status" value="1"/>
</dbReference>
<dbReference type="PANTHER" id="PTHR48277">
    <property type="entry name" value="MITOCHONDRIAL RIBOSOMAL PROTEIN S5"/>
    <property type="match status" value="1"/>
</dbReference>
<dbReference type="PANTHER" id="PTHR48277:SF1">
    <property type="entry name" value="MITOCHONDRIAL RIBOSOMAL PROTEIN S5"/>
    <property type="match status" value="1"/>
</dbReference>
<dbReference type="Pfam" id="PF00333">
    <property type="entry name" value="Ribosomal_S5"/>
    <property type="match status" value="1"/>
</dbReference>
<dbReference type="Pfam" id="PF03719">
    <property type="entry name" value="Ribosomal_S5_C"/>
    <property type="match status" value="1"/>
</dbReference>
<dbReference type="SUPFAM" id="SSF54768">
    <property type="entry name" value="dsRNA-binding domain-like"/>
    <property type="match status" value="1"/>
</dbReference>
<dbReference type="SUPFAM" id="SSF54211">
    <property type="entry name" value="Ribosomal protein S5 domain 2-like"/>
    <property type="match status" value="1"/>
</dbReference>
<dbReference type="PROSITE" id="PS00585">
    <property type="entry name" value="RIBOSOMAL_S5"/>
    <property type="match status" value="1"/>
</dbReference>
<dbReference type="PROSITE" id="PS50881">
    <property type="entry name" value="S5_DSRBD"/>
    <property type="match status" value="1"/>
</dbReference>
<accession>A0ALV1</accession>